<dbReference type="EC" id="4.99.1.9" evidence="1"/>
<dbReference type="EMBL" id="AP008934">
    <property type="protein sequence ID" value="BAE18111.1"/>
    <property type="molecule type" value="Genomic_DNA"/>
</dbReference>
<dbReference type="SMR" id="Q49YM6"/>
<dbReference type="KEGG" id="ssp:SSP0966"/>
<dbReference type="eggNOG" id="COG0276">
    <property type="taxonomic scope" value="Bacteria"/>
</dbReference>
<dbReference type="HOGENOM" id="CLU_018884_2_1_9"/>
<dbReference type="OrthoDB" id="9776380at2"/>
<dbReference type="UniPathway" id="UPA00252"/>
<dbReference type="Proteomes" id="UP000006371">
    <property type="component" value="Chromosome"/>
</dbReference>
<dbReference type="GO" id="GO:0005737">
    <property type="term" value="C:cytoplasm"/>
    <property type="evidence" value="ECO:0007669"/>
    <property type="project" value="UniProtKB-SubCell"/>
</dbReference>
<dbReference type="GO" id="GO:0004325">
    <property type="term" value="F:ferrochelatase activity"/>
    <property type="evidence" value="ECO:0007669"/>
    <property type="project" value="UniProtKB-UniRule"/>
</dbReference>
<dbReference type="GO" id="GO:0046872">
    <property type="term" value="F:metal ion binding"/>
    <property type="evidence" value="ECO:0007669"/>
    <property type="project" value="UniProtKB-KW"/>
</dbReference>
<dbReference type="GO" id="GO:0006783">
    <property type="term" value="P:heme biosynthetic process"/>
    <property type="evidence" value="ECO:0007669"/>
    <property type="project" value="UniProtKB-UniRule"/>
</dbReference>
<dbReference type="CDD" id="cd00419">
    <property type="entry name" value="Ferrochelatase_C"/>
    <property type="match status" value="1"/>
</dbReference>
<dbReference type="CDD" id="cd03411">
    <property type="entry name" value="Ferrochelatase_N"/>
    <property type="match status" value="1"/>
</dbReference>
<dbReference type="FunFam" id="3.40.50.1400:FF:000009">
    <property type="entry name" value="Ferrochelatase"/>
    <property type="match status" value="1"/>
</dbReference>
<dbReference type="Gene3D" id="3.40.50.1400">
    <property type="match status" value="2"/>
</dbReference>
<dbReference type="HAMAP" id="MF_00323">
    <property type="entry name" value="Ferrochelatase"/>
    <property type="match status" value="1"/>
</dbReference>
<dbReference type="InterPro" id="IPR001015">
    <property type="entry name" value="Ferrochelatase"/>
</dbReference>
<dbReference type="InterPro" id="IPR019772">
    <property type="entry name" value="Ferrochelatase_AS"/>
</dbReference>
<dbReference type="InterPro" id="IPR033644">
    <property type="entry name" value="Ferrochelatase_C"/>
</dbReference>
<dbReference type="InterPro" id="IPR033659">
    <property type="entry name" value="Ferrochelatase_N"/>
</dbReference>
<dbReference type="NCBIfam" id="TIGR00109">
    <property type="entry name" value="hemH"/>
    <property type="match status" value="1"/>
</dbReference>
<dbReference type="NCBIfam" id="NF009095">
    <property type="entry name" value="PRK12435.1"/>
    <property type="match status" value="1"/>
</dbReference>
<dbReference type="PANTHER" id="PTHR11108">
    <property type="entry name" value="FERROCHELATASE"/>
    <property type="match status" value="1"/>
</dbReference>
<dbReference type="PANTHER" id="PTHR11108:SF1">
    <property type="entry name" value="FERROCHELATASE, MITOCHONDRIAL"/>
    <property type="match status" value="1"/>
</dbReference>
<dbReference type="Pfam" id="PF00762">
    <property type="entry name" value="Ferrochelatase"/>
    <property type="match status" value="1"/>
</dbReference>
<dbReference type="SUPFAM" id="SSF53800">
    <property type="entry name" value="Chelatase"/>
    <property type="match status" value="1"/>
</dbReference>
<dbReference type="PROSITE" id="PS00534">
    <property type="entry name" value="FERROCHELATASE"/>
    <property type="match status" value="1"/>
</dbReference>
<proteinExistence type="inferred from homology"/>
<accession>Q49YM6</accession>
<protein>
    <recommendedName>
        <fullName evidence="1">Coproporphyrin III ferrochelatase</fullName>
        <ecNumber evidence="1">4.99.1.9</ecNumber>
    </recommendedName>
</protein>
<evidence type="ECO:0000255" key="1">
    <source>
        <dbReference type="HAMAP-Rule" id="MF_00323"/>
    </source>
</evidence>
<keyword id="KW-0963">Cytoplasm</keyword>
<keyword id="KW-0350">Heme biosynthesis</keyword>
<keyword id="KW-0408">Iron</keyword>
<keyword id="KW-0456">Lyase</keyword>
<keyword id="KW-0479">Metal-binding</keyword>
<keyword id="KW-0627">Porphyrin biosynthesis</keyword>
<keyword id="KW-1185">Reference proteome</keyword>
<comment type="function">
    <text evidence="1">Involved in coproporphyrin-dependent heme b biosynthesis. Catalyzes the insertion of ferrous iron into coproporphyrin III to form Fe-coproporphyrin III.</text>
</comment>
<comment type="catalytic activity">
    <reaction evidence="1">
        <text>Fe-coproporphyrin III + 2 H(+) = coproporphyrin III + Fe(2+)</text>
        <dbReference type="Rhea" id="RHEA:49572"/>
        <dbReference type="ChEBI" id="CHEBI:15378"/>
        <dbReference type="ChEBI" id="CHEBI:29033"/>
        <dbReference type="ChEBI" id="CHEBI:68438"/>
        <dbReference type="ChEBI" id="CHEBI:131725"/>
        <dbReference type="EC" id="4.99.1.9"/>
    </reaction>
    <physiologicalReaction direction="right-to-left" evidence="1">
        <dbReference type="Rhea" id="RHEA:49574"/>
    </physiologicalReaction>
</comment>
<comment type="pathway">
    <text evidence="1">Porphyrin-containing compound metabolism; protoheme biosynthesis.</text>
</comment>
<comment type="subcellular location">
    <subcellularLocation>
        <location evidence="1">Cytoplasm</location>
    </subcellularLocation>
</comment>
<comment type="similarity">
    <text evidence="1">Belongs to the ferrochelatase family.</text>
</comment>
<gene>
    <name evidence="1" type="primary">cpfC</name>
    <name type="ordered locus">SSP0966</name>
</gene>
<reference key="1">
    <citation type="journal article" date="2005" name="Proc. Natl. Acad. Sci. U.S.A.">
        <title>Whole genome sequence of Staphylococcus saprophyticus reveals the pathogenesis of uncomplicated urinary tract infection.</title>
        <authorList>
            <person name="Kuroda M."/>
            <person name="Yamashita A."/>
            <person name="Hirakawa H."/>
            <person name="Kumano M."/>
            <person name="Morikawa K."/>
            <person name="Higashide M."/>
            <person name="Maruyama A."/>
            <person name="Inose Y."/>
            <person name="Matoba K."/>
            <person name="Toh H."/>
            <person name="Kuhara S."/>
            <person name="Hattori M."/>
            <person name="Ohta T."/>
        </authorList>
    </citation>
    <scope>NUCLEOTIDE SEQUENCE [LARGE SCALE GENOMIC DNA]</scope>
    <source>
        <strain>ATCC 15305 / DSM 20229 / NCIMB 8711 / NCTC 7292 / S-41</strain>
    </source>
</reference>
<sequence>MTKTIGLLVMAYGTPYKESDIEAYYTDIRHGKKPTEAELQDLKDRYQFIGGLSPLAGTTNRQAESLRDALNQAYDDVEFKLYIGLKHIHPFIEDAVQSMHEDGIDEAVTVVLAPHYSSFSVGSYNTRAQKEADKYGITFKHVEHYYQQPKFIQYWTEKINETLADIPQDEHDKTVLVVSAHSLPKGLIEKNNDPYPNELHETAQLLEQHSNIIHVAEGWQSEGNTGTPWLGPDVQDLTRALYNEHKYEHFIYTPVGFVCEHLEVLYDNDYECKVICDELGVHYHRPKMPDTDPLFIGAIVEEIKNVY</sequence>
<name>CPFC_STAS1</name>
<feature type="chain" id="PRO_1000019373" description="Coproporphyrin III ferrochelatase">
    <location>
        <begin position="1"/>
        <end position="307"/>
    </location>
</feature>
<feature type="binding site" description="axial binding residue" evidence="1">
    <location>
        <position position="12"/>
    </location>
    <ligand>
        <name>Fe-coproporphyrin III</name>
        <dbReference type="ChEBI" id="CHEBI:68438"/>
    </ligand>
    <ligandPart>
        <name>Fe</name>
        <dbReference type="ChEBI" id="CHEBI:18248"/>
    </ligandPart>
</feature>
<feature type="binding site" evidence="1">
    <location>
        <position position="29"/>
    </location>
    <ligand>
        <name>Fe-coproporphyrin III</name>
        <dbReference type="ChEBI" id="CHEBI:68438"/>
    </ligand>
</feature>
<feature type="binding site" evidence="1">
    <location>
        <begin position="45"/>
        <end position="46"/>
    </location>
    <ligand>
        <name>Fe-coproporphyrin III</name>
        <dbReference type="ChEBI" id="CHEBI:68438"/>
    </ligand>
</feature>
<feature type="binding site" evidence="1">
    <location>
        <position position="53"/>
    </location>
    <ligand>
        <name>Fe-coproporphyrin III</name>
        <dbReference type="ChEBI" id="CHEBI:68438"/>
    </ligand>
</feature>
<feature type="binding site" evidence="1">
    <location>
        <position position="124"/>
    </location>
    <ligand>
        <name>Fe-coproporphyrin III</name>
        <dbReference type="ChEBI" id="CHEBI:68438"/>
    </ligand>
</feature>
<feature type="binding site" evidence="1">
    <location>
        <position position="181"/>
    </location>
    <ligand>
        <name>Fe(2+)</name>
        <dbReference type="ChEBI" id="CHEBI:29033"/>
    </ligand>
</feature>
<feature type="binding site" evidence="1">
    <location>
        <position position="263"/>
    </location>
    <ligand>
        <name>Fe(2+)</name>
        <dbReference type="ChEBI" id="CHEBI:29033"/>
    </ligand>
</feature>
<organism>
    <name type="scientific">Staphylococcus saprophyticus subsp. saprophyticus (strain ATCC 15305 / DSM 20229 / NCIMB 8711 / NCTC 7292 / S-41)</name>
    <dbReference type="NCBI Taxonomy" id="342451"/>
    <lineage>
        <taxon>Bacteria</taxon>
        <taxon>Bacillati</taxon>
        <taxon>Bacillota</taxon>
        <taxon>Bacilli</taxon>
        <taxon>Bacillales</taxon>
        <taxon>Staphylococcaceae</taxon>
        <taxon>Staphylococcus</taxon>
    </lineage>
</organism>